<organism>
    <name type="scientific">Nitrosococcus oceani (strain ATCC 19707 / BCRC 17464 / JCM 30415 / NCIMB 11848 / C-107)</name>
    <dbReference type="NCBI Taxonomy" id="323261"/>
    <lineage>
        <taxon>Bacteria</taxon>
        <taxon>Pseudomonadati</taxon>
        <taxon>Pseudomonadota</taxon>
        <taxon>Gammaproteobacteria</taxon>
        <taxon>Chromatiales</taxon>
        <taxon>Chromatiaceae</taxon>
        <taxon>Nitrosococcus</taxon>
    </lineage>
</organism>
<comment type="function">
    <text evidence="1">Plays an essential role in the initiation and regulation of chromosomal replication. ATP-DnaA binds to the origin of replication (oriC) to initiate formation of the DNA replication initiation complex once per cell cycle. Binds the DnaA box (a 9 base pair repeat at the origin) and separates the double-stranded (ds)DNA. Forms a right-handed helical filament on oriC DNA; dsDNA binds to the exterior of the filament while single-stranded (ss)DNA is stabiized in the filament's interior. The ATP-DnaA-oriC complex binds and stabilizes one strand of the AT-rich DNA unwinding element (DUE), permitting loading of DNA polymerase. After initiation quickly degrades to an ADP-DnaA complex that is not apt for DNA replication. Binds acidic phospholipids.</text>
</comment>
<comment type="subunit">
    <text evidence="1">Oligomerizes as a right-handed, spiral filament on DNA at oriC.</text>
</comment>
<comment type="subcellular location">
    <subcellularLocation>
        <location evidence="1">Cytoplasm</location>
    </subcellularLocation>
</comment>
<comment type="domain">
    <text evidence="1">Domain I is involved in oligomerization and binding regulators, domain II is flexibile and of varying length in different bacteria, domain III forms the AAA+ region, while domain IV binds dsDNA.</text>
</comment>
<comment type="similarity">
    <text evidence="1">Belongs to the DnaA family.</text>
</comment>
<gene>
    <name evidence="1" type="primary">dnaA</name>
    <name type="ordered locus">Noc_0001</name>
</gene>
<reference key="1">
    <citation type="journal article" date="2006" name="Appl. Environ. Microbiol.">
        <title>Complete genome sequence of the marine, chemolithoautotrophic, ammonia-oxidizing bacterium Nitrosococcus oceani ATCC 19707.</title>
        <authorList>
            <person name="Klotz M.G."/>
            <person name="Arp D.J."/>
            <person name="Chain P.S.G."/>
            <person name="El-Sheikh A.F."/>
            <person name="Hauser L.J."/>
            <person name="Hommes N.G."/>
            <person name="Larimer F.W."/>
            <person name="Malfatti S.A."/>
            <person name="Norton J.M."/>
            <person name="Poret-Peterson A.T."/>
            <person name="Vergez L.M."/>
            <person name="Ward B.B."/>
        </authorList>
    </citation>
    <scope>NUCLEOTIDE SEQUENCE [LARGE SCALE GENOMIC DNA]</scope>
    <source>
        <strain>ATCC 19707 / BCRC 17464 / JCM 30415 / NCIMB 11848 / C-107</strain>
    </source>
</reference>
<protein>
    <recommendedName>
        <fullName evidence="1">Chromosomal replication initiator protein DnaA</fullName>
    </recommendedName>
</protein>
<evidence type="ECO:0000255" key="1">
    <source>
        <dbReference type="HAMAP-Rule" id="MF_00377"/>
    </source>
</evidence>
<name>DNAA_NITOC</name>
<keyword id="KW-0067">ATP-binding</keyword>
<keyword id="KW-0963">Cytoplasm</keyword>
<keyword id="KW-0235">DNA replication</keyword>
<keyword id="KW-0238">DNA-binding</keyword>
<keyword id="KW-0446">Lipid-binding</keyword>
<keyword id="KW-0547">Nucleotide-binding</keyword>
<keyword id="KW-1185">Reference proteome</keyword>
<proteinExistence type="inferred from homology"/>
<dbReference type="EMBL" id="CP000127">
    <property type="protein sequence ID" value="ABA56557.1"/>
    <property type="molecule type" value="Genomic_DNA"/>
</dbReference>
<dbReference type="SMR" id="Q3JF39"/>
<dbReference type="FunCoup" id="Q3JF39">
    <property type="interactions" value="285"/>
</dbReference>
<dbReference type="STRING" id="323261.Noc_0001"/>
<dbReference type="KEGG" id="noc:Noc_0001"/>
<dbReference type="eggNOG" id="COG0593">
    <property type="taxonomic scope" value="Bacteria"/>
</dbReference>
<dbReference type="HOGENOM" id="CLU_026910_0_1_6"/>
<dbReference type="InParanoid" id="Q3JF39"/>
<dbReference type="Proteomes" id="UP000006838">
    <property type="component" value="Chromosome"/>
</dbReference>
<dbReference type="GO" id="GO:0005737">
    <property type="term" value="C:cytoplasm"/>
    <property type="evidence" value="ECO:0007669"/>
    <property type="project" value="UniProtKB-SubCell"/>
</dbReference>
<dbReference type="GO" id="GO:0005886">
    <property type="term" value="C:plasma membrane"/>
    <property type="evidence" value="ECO:0007669"/>
    <property type="project" value="TreeGrafter"/>
</dbReference>
<dbReference type="GO" id="GO:0005524">
    <property type="term" value="F:ATP binding"/>
    <property type="evidence" value="ECO:0007669"/>
    <property type="project" value="UniProtKB-UniRule"/>
</dbReference>
<dbReference type="GO" id="GO:0016887">
    <property type="term" value="F:ATP hydrolysis activity"/>
    <property type="evidence" value="ECO:0007669"/>
    <property type="project" value="InterPro"/>
</dbReference>
<dbReference type="GO" id="GO:0003688">
    <property type="term" value="F:DNA replication origin binding"/>
    <property type="evidence" value="ECO:0007669"/>
    <property type="project" value="UniProtKB-UniRule"/>
</dbReference>
<dbReference type="GO" id="GO:0008289">
    <property type="term" value="F:lipid binding"/>
    <property type="evidence" value="ECO:0007669"/>
    <property type="project" value="UniProtKB-KW"/>
</dbReference>
<dbReference type="GO" id="GO:0006270">
    <property type="term" value="P:DNA replication initiation"/>
    <property type="evidence" value="ECO:0007669"/>
    <property type="project" value="UniProtKB-UniRule"/>
</dbReference>
<dbReference type="GO" id="GO:0006275">
    <property type="term" value="P:regulation of DNA replication"/>
    <property type="evidence" value="ECO:0007669"/>
    <property type="project" value="UniProtKB-UniRule"/>
</dbReference>
<dbReference type="CDD" id="cd00009">
    <property type="entry name" value="AAA"/>
    <property type="match status" value="1"/>
</dbReference>
<dbReference type="CDD" id="cd06571">
    <property type="entry name" value="Bac_DnaA_C"/>
    <property type="match status" value="1"/>
</dbReference>
<dbReference type="FunFam" id="1.10.8.60:FF:000003">
    <property type="entry name" value="Chromosomal replication initiator protein DnaA"/>
    <property type="match status" value="1"/>
</dbReference>
<dbReference type="FunFam" id="3.40.50.300:FF:000103">
    <property type="entry name" value="Chromosomal replication initiator protein DnaA"/>
    <property type="match status" value="1"/>
</dbReference>
<dbReference type="Gene3D" id="1.10.1750.10">
    <property type="match status" value="1"/>
</dbReference>
<dbReference type="Gene3D" id="1.10.8.60">
    <property type="match status" value="1"/>
</dbReference>
<dbReference type="Gene3D" id="3.30.300.180">
    <property type="match status" value="1"/>
</dbReference>
<dbReference type="Gene3D" id="3.40.50.300">
    <property type="entry name" value="P-loop containing nucleotide triphosphate hydrolases"/>
    <property type="match status" value="1"/>
</dbReference>
<dbReference type="HAMAP" id="MF_00377">
    <property type="entry name" value="DnaA_bact"/>
    <property type="match status" value="1"/>
</dbReference>
<dbReference type="InterPro" id="IPR003593">
    <property type="entry name" value="AAA+_ATPase"/>
</dbReference>
<dbReference type="InterPro" id="IPR001957">
    <property type="entry name" value="Chromosome_initiator_DnaA"/>
</dbReference>
<dbReference type="InterPro" id="IPR020591">
    <property type="entry name" value="Chromosome_initiator_DnaA-like"/>
</dbReference>
<dbReference type="InterPro" id="IPR018312">
    <property type="entry name" value="Chromosome_initiator_DnaA_CS"/>
</dbReference>
<dbReference type="InterPro" id="IPR013159">
    <property type="entry name" value="DnaA_C"/>
</dbReference>
<dbReference type="InterPro" id="IPR013317">
    <property type="entry name" value="DnaA_dom"/>
</dbReference>
<dbReference type="InterPro" id="IPR024633">
    <property type="entry name" value="DnaA_N_dom"/>
</dbReference>
<dbReference type="InterPro" id="IPR038454">
    <property type="entry name" value="DnaA_N_sf"/>
</dbReference>
<dbReference type="InterPro" id="IPR027417">
    <property type="entry name" value="P-loop_NTPase"/>
</dbReference>
<dbReference type="InterPro" id="IPR010921">
    <property type="entry name" value="Trp_repressor/repl_initiator"/>
</dbReference>
<dbReference type="NCBIfam" id="TIGR00362">
    <property type="entry name" value="DnaA"/>
    <property type="match status" value="1"/>
</dbReference>
<dbReference type="PANTHER" id="PTHR30050">
    <property type="entry name" value="CHROMOSOMAL REPLICATION INITIATOR PROTEIN DNAA"/>
    <property type="match status" value="1"/>
</dbReference>
<dbReference type="PANTHER" id="PTHR30050:SF2">
    <property type="entry name" value="CHROMOSOMAL REPLICATION INITIATOR PROTEIN DNAA"/>
    <property type="match status" value="1"/>
</dbReference>
<dbReference type="Pfam" id="PF00308">
    <property type="entry name" value="Bac_DnaA"/>
    <property type="match status" value="1"/>
</dbReference>
<dbReference type="Pfam" id="PF08299">
    <property type="entry name" value="Bac_DnaA_C"/>
    <property type="match status" value="1"/>
</dbReference>
<dbReference type="Pfam" id="PF11638">
    <property type="entry name" value="DnaA_N"/>
    <property type="match status" value="1"/>
</dbReference>
<dbReference type="PRINTS" id="PR00051">
    <property type="entry name" value="DNAA"/>
</dbReference>
<dbReference type="SMART" id="SM00382">
    <property type="entry name" value="AAA"/>
    <property type="match status" value="1"/>
</dbReference>
<dbReference type="SMART" id="SM00760">
    <property type="entry name" value="Bac_DnaA_C"/>
    <property type="match status" value="1"/>
</dbReference>
<dbReference type="SUPFAM" id="SSF52540">
    <property type="entry name" value="P-loop containing nucleoside triphosphate hydrolases"/>
    <property type="match status" value="1"/>
</dbReference>
<dbReference type="SUPFAM" id="SSF48295">
    <property type="entry name" value="TrpR-like"/>
    <property type="match status" value="1"/>
</dbReference>
<dbReference type="PROSITE" id="PS01008">
    <property type="entry name" value="DNAA"/>
    <property type="match status" value="1"/>
</dbReference>
<sequence>MPSSLWKHCLNHLEGELDPQEFNTYIRPLQAIQQGTSLQLYAPNQFVIDWVQNCAESRINALLSHYSSGRIEKALLEVGSCSLQPQPHIQAVELTSKSARSSSRVVDRIPESRLNKNYTFDSFVEGKSNQLPRAASHQVAENPGSAYNPLFIYGGVGLGKTHLMHAVGNYIRSRNPSARVVYLHSEQFVAEMIKALQLNAINEFKTRYRSVDILLIDDIQFFAGKERSQEEFFYTFNTLLEVQHQIILTCDRFPKEVNGLEERLTSRFGWGLTVAVEPPELETRVAILMNKASIENIILSDDVAFFLGRLIYSNIRELEGALRRVIAYSRFTHRPITMELTREALKDLLTLQEKLVTIENIQKTVAEYYKIRVSDLSSKRRSRVVARPRQTAMSLSKELTDHSLTEIGKFFGGRDHTTVLHACRKINELKSIDRRMAEDYHNLLKKLST</sequence>
<feature type="chain" id="PRO_1000048681" description="Chromosomal replication initiator protein DnaA">
    <location>
        <begin position="1"/>
        <end position="449"/>
    </location>
</feature>
<feature type="region of interest" description="Domain I, interacts with DnaA modulators" evidence="1">
    <location>
        <begin position="1"/>
        <end position="71"/>
    </location>
</feature>
<feature type="region of interest" description="Domain II" evidence="1">
    <location>
        <begin position="71"/>
        <end position="112"/>
    </location>
</feature>
<feature type="region of interest" description="Domain III, AAA+ region" evidence="1">
    <location>
        <begin position="113"/>
        <end position="329"/>
    </location>
</feature>
<feature type="region of interest" description="Domain IV, binds dsDNA" evidence="1">
    <location>
        <begin position="330"/>
        <end position="449"/>
    </location>
</feature>
<feature type="binding site" evidence="1">
    <location>
        <position position="157"/>
    </location>
    <ligand>
        <name>ATP</name>
        <dbReference type="ChEBI" id="CHEBI:30616"/>
    </ligand>
</feature>
<feature type="binding site" evidence="1">
    <location>
        <position position="159"/>
    </location>
    <ligand>
        <name>ATP</name>
        <dbReference type="ChEBI" id="CHEBI:30616"/>
    </ligand>
</feature>
<feature type="binding site" evidence="1">
    <location>
        <position position="160"/>
    </location>
    <ligand>
        <name>ATP</name>
        <dbReference type="ChEBI" id="CHEBI:30616"/>
    </ligand>
</feature>
<feature type="binding site" evidence="1">
    <location>
        <position position="161"/>
    </location>
    <ligand>
        <name>ATP</name>
        <dbReference type="ChEBI" id="CHEBI:30616"/>
    </ligand>
</feature>
<accession>Q3JF39</accession>